<reference key="1">
    <citation type="journal article" date="2003" name="Proc. Natl. Acad. Sci. U.S.A.">
        <title>The complete genome sequence of the Arabidopsis and tomato pathogen Pseudomonas syringae pv. tomato DC3000.</title>
        <authorList>
            <person name="Buell C.R."/>
            <person name="Joardar V."/>
            <person name="Lindeberg M."/>
            <person name="Selengut J."/>
            <person name="Paulsen I.T."/>
            <person name="Gwinn M.L."/>
            <person name="Dodson R.J."/>
            <person name="DeBoy R.T."/>
            <person name="Durkin A.S."/>
            <person name="Kolonay J.F."/>
            <person name="Madupu R."/>
            <person name="Daugherty S.C."/>
            <person name="Brinkac L.M."/>
            <person name="Beanan M.J."/>
            <person name="Haft D.H."/>
            <person name="Nelson W.C."/>
            <person name="Davidsen T.M."/>
            <person name="Zafar N."/>
            <person name="Zhou L."/>
            <person name="Liu J."/>
            <person name="Yuan Q."/>
            <person name="Khouri H.M."/>
            <person name="Fedorova N.B."/>
            <person name="Tran B."/>
            <person name="Russell D."/>
            <person name="Berry K.J."/>
            <person name="Utterback T.R."/>
            <person name="Van Aken S.E."/>
            <person name="Feldblyum T.V."/>
            <person name="D'Ascenzo M."/>
            <person name="Deng W.-L."/>
            <person name="Ramos A.R."/>
            <person name="Alfano J.R."/>
            <person name="Cartinhour S."/>
            <person name="Chatterjee A.K."/>
            <person name="Delaney T.P."/>
            <person name="Lazarowitz S.G."/>
            <person name="Martin G.B."/>
            <person name="Schneider D.J."/>
            <person name="Tang X."/>
            <person name="Bender C.L."/>
            <person name="White O."/>
            <person name="Fraser C.M."/>
            <person name="Collmer A."/>
        </authorList>
    </citation>
    <scope>NUCLEOTIDE SEQUENCE [LARGE SCALE GENOMIC DNA]</scope>
    <source>
        <strain>ATCC BAA-871 / DC3000</strain>
    </source>
</reference>
<sequence length="855" mass="95201">MTDLSQHTPMMQQYWKLKNQHLDQLMFYRMGDFYEIFYEDAKKAAKLLDITLTARGQSAGQSIPMCGIPYHAAEGYLAKLVKLGESVVICEQIGDPATSKGPVDRQVVRIITPGTISDEALLDERRDNLIAAVLGDERLFGLAVLDITSGNFSVLEIKGWENLLAELERINPVELLIPDDWPQGLPAEKRRGARRRAPWDFERDSAHKSLCQQFSTQDLKGFGCETLTLAIGAAGCLLGYAKETQRTALPHLRSLRHERLDDTVILDAASRRNLELDTNLSGGRDNTLQSVMDRCQTAMGTRLLTRWLNRPLRDLSILQARQTSITCFLERYRFENLQPQLKEIGDIERILARIGLRNARPRDLARLRDALSALPELQQAMTDLDAPHLQQLAQTASTYPELADLLQRAINDNPPAVIRDGGVLKTGYDAELDELQSLSENAGQFLIDLEAREKARTGLSHLKVGYNRVHGYFIELPSKQAEQAPADYIRRQTLKGAERFITPELKEFEDKALSAKSRALAREKMLYETLLEDLIGHLAPLQDTAAALAELDVLSNLAERALNLDLNCPRFVAEPCMRIEQGRHPVVEQVLSTPFVANDLALDDSTRMLIITGPNMGGKSTYMRQTALIVLLAHIGSFVPAASCELSLVDRIFTRIGSSDDLAGGRSTFMVEMSETANILHNATDKSLVLMDEVGRGTSTFDGLSLAWAAAECLAQLRAYTLFATHYFELTVLPESEPLVNNVHLNATEHNERIVFLHRVLPGPASQSYGLAVAQLAGVPGKVITRAKEHLQRLETTSLPHEQPRAKPGKPAIPQQSDMFASLPHPVLDELSKIKVDDMTPRQALDLLYTLQTRL</sequence>
<keyword id="KW-0067">ATP-binding</keyword>
<keyword id="KW-0227">DNA damage</keyword>
<keyword id="KW-0234">DNA repair</keyword>
<keyword id="KW-0238">DNA-binding</keyword>
<keyword id="KW-0547">Nucleotide-binding</keyword>
<keyword id="KW-1185">Reference proteome</keyword>
<organism>
    <name type="scientific">Pseudomonas syringae pv. tomato (strain ATCC BAA-871 / DC3000)</name>
    <dbReference type="NCBI Taxonomy" id="223283"/>
    <lineage>
        <taxon>Bacteria</taxon>
        <taxon>Pseudomonadati</taxon>
        <taxon>Pseudomonadota</taxon>
        <taxon>Gammaproteobacteria</taxon>
        <taxon>Pseudomonadales</taxon>
        <taxon>Pseudomonadaceae</taxon>
        <taxon>Pseudomonas</taxon>
    </lineage>
</organism>
<gene>
    <name evidence="1" type="primary">mutS</name>
    <name type="ordered locus">PSPTO_4058</name>
</gene>
<dbReference type="EMBL" id="AE016853">
    <property type="protein sequence ID" value="AAO57515.1"/>
    <property type="molecule type" value="Genomic_DNA"/>
</dbReference>
<dbReference type="RefSeq" id="NP_793820.1">
    <property type="nucleotide sequence ID" value="NC_004578.1"/>
</dbReference>
<dbReference type="RefSeq" id="WP_011104855.1">
    <property type="nucleotide sequence ID" value="NC_004578.1"/>
</dbReference>
<dbReference type="SMR" id="Q87XW6"/>
<dbReference type="STRING" id="223283.PSPTO_4058"/>
<dbReference type="GeneID" id="1185738"/>
<dbReference type="KEGG" id="pst:PSPTO_4058"/>
<dbReference type="PATRIC" id="fig|223283.9.peg.4161"/>
<dbReference type="eggNOG" id="COG0249">
    <property type="taxonomic scope" value="Bacteria"/>
</dbReference>
<dbReference type="HOGENOM" id="CLU_002472_4_0_6"/>
<dbReference type="OrthoDB" id="9802448at2"/>
<dbReference type="PhylomeDB" id="Q87XW6"/>
<dbReference type="Proteomes" id="UP000002515">
    <property type="component" value="Chromosome"/>
</dbReference>
<dbReference type="GO" id="GO:0005829">
    <property type="term" value="C:cytosol"/>
    <property type="evidence" value="ECO:0007669"/>
    <property type="project" value="TreeGrafter"/>
</dbReference>
<dbReference type="GO" id="GO:0005524">
    <property type="term" value="F:ATP binding"/>
    <property type="evidence" value="ECO:0007669"/>
    <property type="project" value="UniProtKB-UniRule"/>
</dbReference>
<dbReference type="GO" id="GO:0140664">
    <property type="term" value="F:ATP-dependent DNA damage sensor activity"/>
    <property type="evidence" value="ECO:0007669"/>
    <property type="project" value="InterPro"/>
</dbReference>
<dbReference type="GO" id="GO:0003684">
    <property type="term" value="F:damaged DNA binding"/>
    <property type="evidence" value="ECO:0007669"/>
    <property type="project" value="UniProtKB-UniRule"/>
</dbReference>
<dbReference type="GO" id="GO:0030983">
    <property type="term" value="F:mismatched DNA binding"/>
    <property type="evidence" value="ECO:0007669"/>
    <property type="project" value="InterPro"/>
</dbReference>
<dbReference type="GO" id="GO:0006298">
    <property type="term" value="P:mismatch repair"/>
    <property type="evidence" value="ECO:0007669"/>
    <property type="project" value="UniProtKB-UniRule"/>
</dbReference>
<dbReference type="CDD" id="cd03284">
    <property type="entry name" value="ABC_MutS1"/>
    <property type="match status" value="1"/>
</dbReference>
<dbReference type="FunFam" id="1.10.1420.10:FF:000002">
    <property type="entry name" value="DNA mismatch repair protein MutS"/>
    <property type="match status" value="1"/>
</dbReference>
<dbReference type="FunFam" id="3.40.1170.10:FF:000001">
    <property type="entry name" value="DNA mismatch repair protein MutS"/>
    <property type="match status" value="1"/>
</dbReference>
<dbReference type="FunFam" id="3.40.50.300:FF:000283">
    <property type="entry name" value="DNA mismatch repair protein MutS"/>
    <property type="match status" value="1"/>
</dbReference>
<dbReference type="Gene3D" id="1.10.1420.10">
    <property type="match status" value="2"/>
</dbReference>
<dbReference type="Gene3D" id="6.10.140.430">
    <property type="match status" value="1"/>
</dbReference>
<dbReference type="Gene3D" id="3.40.1170.10">
    <property type="entry name" value="DNA repair protein MutS, domain I"/>
    <property type="match status" value="1"/>
</dbReference>
<dbReference type="Gene3D" id="3.30.420.110">
    <property type="entry name" value="MutS, connector domain"/>
    <property type="match status" value="1"/>
</dbReference>
<dbReference type="Gene3D" id="3.40.50.300">
    <property type="entry name" value="P-loop containing nucleotide triphosphate hydrolases"/>
    <property type="match status" value="1"/>
</dbReference>
<dbReference type="HAMAP" id="MF_00096">
    <property type="entry name" value="MutS"/>
    <property type="match status" value="1"/>
</dbReference>
<dbReference type="InterPro" id="IPR005748">
    <property type="entry name" value="DNA_mismatch_repair_MutS"/>
</dbReference>
<dbReference type="InterPro" id="IPR007695">
    <property type="entry name" value="DNA_mismatch_repair_MutS-lik_N"/>
</dbReference>
<dbReference type="InterPro" id="IPR017261">
    <property type="entry name" value="DNA_mismatch_repair_MutS/MSH"/>
</dbReference>
<dbReference type="InterPro" id="IPR000432">
    <property type="entry name" value="DNA_mismatch_repair_MutS_C"/>
</dbReference>
<dbReference type="InterPro" id="IPR007861">
    <property type="entry name" value="DNA_mismatch_repair_MutS_clamp"/>
</dbReference>
<dbReference type="InterPro" id="IPR007696">
    <property type="entry name" value="DNA_mismatch_repair_MutS_core"/>
</dbReference>
<dbReference type="InterPro" id="IPR016151">
    <property type="entry name" value="DNA_mismatch_repair_MutS_N"/>
</dbReference>
<dbReference type="InterPro" id="IPR036187">
    <property type="entry name" value="DNA_mismatch_repair_MutS_sf"/>
</dbReference>
<dbReference type="InterPro" id="IPR007860">
    <property type="entry name" value="DNA_mmatch_repair_MutS_con_dom"/>
</dbReference>
<dbReference type="InterPro" id="IPR045076">
    <property type="entry name" value="MutS"/>
</dbReference>
<dbReference type="InterPro" id="IPR036678">
    <property type="entry name" value="MutS_con_dom_sf"/>
</dbReference>
<dbReference type="InterPro" id="IPR027417">
    <property type="entry name" value="P-loop_NTPase"/>
</dbReference>
<dbReference type="NCBIfam" id="TIGR01070">
    <property type="entry name" value="mutS1"/>
    <property type="match status" value="1"/>
</dbReference>
<dbReference type="NCBIfam" id="NF003810">
    <property type="entry name" value="PRK05399.1"/>
    <property type="match status" value="1"/>
</dbReference>
<dbReference type="PANTHER" id="PTHR11361:SF34">
    <property type="entry name" value="DNA MISMATCH REPAIR PROTEIN MSH1, MITOCHONDRIAL"/>
    <property type="match status" value="1"/>
</dbReference>
<dbReference type="PANTHER" id="PTHR11361">
    <property type="entry name" value="DNA MISMATCH REPAIR PROTEIN MUTS FAMILY MEMBER"/>
    <property type="match status" value="1"/>
</dbReference>
<dbReference type="Pfam" id="PF01624">
    <property type="entry name" value="MutS_I"/>
    <property type="match status" value="1"/>
</dbReference>
<dbReference type="Pfam" id="PF05188">
    <property type="entry name" value="MutS_II"/>
    <property type="match status" value="1"/>
</dbReference>
<dbReference type="Pfam" id="PF05192">
    <property type="entry name" value="MutS_III"/>
    <property type="match status" value="1"/>
</dbReference>
<dbReference type="Pfam" id="PF05190">
    <property type="entry name" value="MutS_IV"/>
    <property type="match status" value="1"/>
</dbReference>
<dbReference type="Pfam" id="PF00488">
    <property type="entry name" value="MutS_V"/>
    <property type="match status" value="1"/>
</dbReference>
<dbReference type="PIRSF" id="PIRSF037677">
    <property type="entry name" value="DNA_mis_repair_Msh6"/>
    <property type="match status" value="1"/>
</dbReference>
<dbReference type="SMART" id="SM00534">
    <property type="entry name" value="MUTSac"/>
    <property type="match status" value="1"/>
</dbReference>
<dbReference type="SMART" id="SM00533">
    <property type="entry name" value="MUTSd"/>
    <property type="match status" value="1"/>
</dbReference>
<dbReference type="SUPFAM" id="SSF55271">
    <property type="entry name" value="DNA repair protein MutS, domain I"/>
    <property type="match status" value="1"/>
</dbReference>
<dbReference type="SUPFAM" id="SSF53150">
    <property type="entry name" value="DNA repair protein MutS, domain II"/>
    <property type="match status" value="1"/>
</dbReference>
<dbReference type="SUPFAM" id="SSF48334">
    <property type="entry name" value="DNA repair protein MutS, domain III"/>
    <property type="match status" value="1"/>
</dbReference>
<dbReference type="SUPFAM" id="SSF52540">
    <property type="entry name" value="P-loop containing nucleoside triphosphate hydrolases"/>
    <property type="match status" value="1"/>
</dbReference>
<dbReference type="PROSITE" id="PS00486">
    <property type="entry name" value="DNA_MISMATCH_REPAIR_2"/>
    <property type="match status" value="1"/>
</dbReference>
<proteinExistence type="inferred from homology"/>
<comment type="function">
    <text evidence="1">This protein is involved in the repair of mismatches in DNA. It is possible that it carries out the mismatch recognition step. This protein has a weak ATPase activity.</text>
</comment>
<comment type="similarity">
    <text evidence="1">Belongs to the DNA mismatch repair MutS family.</text>
</comment>
<evidence type="ECO:0000255" key="1">
    <source>
        <dbReference type="HAMAP-Rule" id="MF_00096"/>
    </source>
</evidence>
<evidence type="ECO:0000256" key="2">
    <source>
        <dbReference type="SAM" id="MobiDB-lite"/>
    </source>
</evidence>
<protein>
    <recommendedName>
        <fullName evidence="1">DNA mismatch repair protein MutS</fullName>
    </recommendedName>
</protein>
<accession>Q87XW6</accession>
<feature type="chain" id="PRO_0000115123" description="DNA mismatch repair protein MutS">
    <location>
        <begin position="1"/>
        <end position="855"/>
    </location>
</feature>
<feature type="region of interest" description="Disordered" evidence="2">
    <location>
        <begin position="796"/>
        <end position="817"/>
    </location>
</feature>
<feature type="binding site" evidence="1">
    <location>
        <begin position="613"/>
        <end position="620"/>
    </location>
    <ligand>
        <name>ATP</name>
        <dbReference type="ChEBI" id="CHEBI:30616"/>
    </ligand>
</feature>
<name>MUTS_PSESM</name>